<dbReference type="EC" id="2.7.4.3" evidence="1"/>
<dbReference type="EMBL" id="Z47075">
    <property type="protein sequence ID" value="CAA87383.2"/>
    <property type="molecule type" value="Genomic_DNA"/>
</dbReference>
<dbReference type="PIR" id="T20418">
    <property type="entry name" value="T20418"/>
</dbReference>
<dbReference type="RefSeq" id="NP_001379068.1">
    <property type="nucleotide sequence ID" value="NM_001393158.1"/>
</dbReference>
<dbReference type="RefSeq" id="NP_496065.1">
    <property type="nucleotide sequence ID" value="NM_063664.7"/>
</dbReference>
<dbReference type="SMR" id="Q09527"/>
<dbReference type="BioGRID" id="39834">
    <property type="interactions" value="1"/>
</dbReference>
<dbReference type="FunCoup" id="Q09527">
    <property type="interactions" value="2085"/>
</dbReference>
<dbReference type="STRING" id="6239.E02H1.6.1"/>
<dbReference type="PaxDb" id="6239-E02H1.6"/>
<dbReference type="PeptideAtlas" id="Q09527"/>
<dbReference type="EnsemblMetazoa" id="E02H1.6.1">
    <property type="protein sequence ID" value="E02H1.6.1"/>
    <property type="gene ID" value="WBGene00008458"/>
</dbReference>
<dbReference type="GeneID" id="174511"/>
<dbReference type="UCSC" id="E02H1.6">
    <property type="organism name" value="c. elegans"/>
</dbReference>
<dbReference type="AGR" id="WB:WBGene00008458"/>
<dbReference type="WormBase" id="E02H1.6">
    <property type="protein sequence ID" value="CE28286"/>
    <property type="gene ID" value="WBGene00008458"/>
</dbReference>
<dbReference type="eggNOG" id="KOG3347">
    <property type="taxonomic scope" value="Eukaryota"/>
</dbReference>
<dbReference type="GeneTree" id="ENSGT00390000015930"/>
<dbReference type="HOGENOM" id="CLU_079096_3_1_1"/>
<dbReference type="InParanoid" id="Q09527"/>
<dbReference type="OMA" id="QCEIFGT"/>
<dbReference type="OrthoDB" id="10251185at2759"/>
<dbReference type="PhylomeDB" id="Q09527"/>
<dbReference type="Reactome" id="R-CEL-499943">
    <property type="pathway name" value="Interconversion of nucleotide di- and triphosphates"/>
</dbReference>
<dbReference type="PRO" id="PR:Q09527"/>
<dbReference type="Proteomes" id="UP000001940">
    <property type="component" value="Chromosome II"/>
</dbReference>
<dbReference type="Bgee" id="WBGene00008458">
    <property type="expression patterns" value="Expressed in pharyngeal muscle cell (C elegans) and 4 other cell types or tissues"/>
</dbReference>
<dbReference type="GO" id="GO:0005737">
    <property type="term" value="C:cytoplasm"/>
    <property type="evidence" value="ECO:0000318"/>
    <property type="project" value="GO_Central"/>
</dbReference>
<dbReference type="GO" id="GO:0005634">
    <property type="term" value="C:nucleus"/>
    <property type="evidence" value="ECO:0000318"/>
    <property type="project" value="GO_Central"/>
</dbReference>
<dbReference type="GO" id="GO:0004017">
    <property type="term" value="F:adenylate kinase activity"/>
    <property type="evidence" value="ECO:0000318"/>
    <property type="project" value="GO_Central"/>
</dbReference>
<dbReference type="GO" id="GO:0005524">
    <property type="term" value="F:ATP binding"/>
    <property type="evidence" value="ECO:0000318"/>
    <property type="project" value="GO_Central"/>
</dbReference>
<dbReference type="GO" id="GO:0016887">
    <property type="term" value="F:ATP hydrolysis activity"/>
    <property type="evidence" value="ECO:0007669"/>
    <property type="project" value="UniProtKB-UniRule"/>
</dbReference>
<dbReference type="GO" id="GO:0042274">
    <property type="term" value="P:ribosomal small subunit biogenesis"/>
    <property type="evidence" value="ECO:0007669"/>
    <property type="project" value="UniProtKB-UniRule"/>
</dbReference>
<dbReference type="GO" id="GO:0006364">
    <property type="term" value="P:rRNA processing"/>
    <property type="evidence" value="ECO:0007669"/>
    <property type="project" value="UniProtKB-KW"/>
</dbReference>
<dbReference type="FunFam" id="3.40.50.300:FF:000372">
    <property type="entry name" value="Adenylate kinase isoenzyme 6 homolog"/>
    <property type="match status" value="1"/>
</dbReference>
<dbReference type="Gene3D" id="3.40.50.300">
    <property type="entry name" value="P-loop containing nucleotide triphosphate hydrolases"/>
    <property type="match status" value="1"/>
</dbReference>
<dbReference type="HAMAP" id="MF_00039">
    <property type="entry name" value="Adenylate_kinase_AK6"/>
    <property type="match status" value="1"/>
</dbReference>
<dbReference type="InterPro" id="IPR020618">
    <property type="entry name" value="Adenyl_kinase_AK6"/>
</dbReference>
<dbReference type="InterPro" id="IPR027417">
    <property type="entry name" value="P-loop_NTPase"/>
</dbReference>
<dbReference type="PANTHER" id="PTHR12595:SF0">
    <property type="entry name" value="ADENYLATE KINASE ISOENZYME 6"/>
    <property type="match status" value="1"/>
</dbReference>
<dbReference type="PANTHER" id="PTHR12595">
    <property type="entry name" value="POS9-ACTIVATING FACTOR FAP7-RELATED"/>
    <property type="match status" value="1"/>
</dbReference>
<dbReference type="Pfam" id="PF13238">
    <property type="entry name" value="AAA_18"/>
    <property type="match status" value="1"/>
</dbReference>
<dbReference type="PRINTS" id="PR01100">
    <property type="entry name" value="SHIKIMTKNASE"/>
</dbReference>
<dbReference type="SUPFAM" id="SSF52540">
    <property type="entry name" value="P-loop containing nucleoside triphosphate hydrolases"/>
    <property type="match status" value="1"/>
</dbReference>
<proteinExistence type="evidence at protein level"/>
<keyword id="KW-0067">ATP-binding</keyword>
<keyword id="KW-0963">Cytoplasm</keyword>
<keyword id="KW-0418">Kinase</keyword>
<keyword id="KW-0547">Nucleotide-binding</keyword>
<keyword id="KW-0539">Nucleus</keyword>
<keyword id="KW-1185">Reference proteome</keyword>
<keyword id="KW-0690">Ribosome biogenesis</keyword>
<keyword id="KW-0698">rRNA processing</keyword>
<keyword id="KW-0808">Transferase</keyword>
<protein>
    <recommendedName>
        <fullName evidence="1">Adenylate kinase isoenzyme 6 homolog</fullName>
        <shortName evidence="1">AK6</shortName>
        <ecNumber evidence="1">2.7.4.3</ecNumber>
    </recommendedName>
    <alternativeName>
        <fullName>Adrenal gland protein AD-004 like protein</fullName>
        <shortName>ADLP</shortName>
    </alternativeName>
    <alternativeName>
        <fullName evidence="1">Dual activity adenylate kinase/ATPase</fullName>
        <shortName evidence="1">AK/ATPase</shortName>
    </alternativeName>
</protein>
<sequence length="182" mass="21024">MATPETRRRPNILVTGSPGTGKSTLGQQVAEKLGFVFIEVSKEVRENNLQGDFDEQYNCHVLDEDKLLDHISDRLDSDEGGIVVDYHGCDLFPERWFDVVVVLRCPTEKLYDRLQSRGYSEFKIKENVECEIFGTLLEEARESYSEDIVHELQSETTEQMEENLERICELAGEFKNEHTMEQ</sequence>
<name>KAD6_CAEEL</name>
<accession>Q09527</accession>
<gene>
    <name type="ORF">E02H1.6</name>
</gene>
<evidence type="ECO:0000255" key="1">
    <source>
        <dbReference type="HAMAP-Rule" id="MF_03173"/>
    </source>
</evidence>
<evidence type="ECO:0000256" key="2">
    <source>
        <dbReference type="SAM" id="MobiDB-lite"/>
    </source>
</evidence>
<evidence type="ECO:0000269" key="3">
    <source>
    </source>
</evidence>
<reference key="1">
    <citation type="journal article" date="1998" name="Science">
        <title>Genome sequence of the nematode C. elegans: a platform for investigating biology.</title>
        <authorList>
            <consortium name="The C. elegans sequencing consortium"/>
        </authorList>
    </citation>
    <scope>NUCLEOTIDE SEQUENCE [LARGE SCALE GENOMIC DNA]</scope>
    <source>
        <strain>Bristol N2</strain>
    </source>
</reference>
<reference key="2">
    <citation type="journal article" date="2006" name="FEBS Lett.">
        <title>A novel nuclear-localized protein with special adenylate kinase properties from Caenorhabditis elegans.</title>
        <authorList>
            <person name="Zhai R."/>
            <person name="Meng G."/>
            <person name="Zhao Y."/>
            <person name="Liu B."/>
            <person name="Zhang G."/>
            <person name="Zheng X."/>
        </authorList>
    </citation>
    <scope>FUNCTION</scope>
    <scope>CATALYTIC ACTIVITY</scope>
    <scope>SUBCELLULAR LOCATION</scope>
    <scope>DISRUPTION PHENOTYPE</scope>
</reference>
<feature type="chain" id="PRO_0000153900" description="Adenylate kinase isoenzyme 6 homolog">
    <location>
        <begin position="1"/>
        <end position="182"/>
    </location>
</feature>
<feature type="region of interest" description="Disordered" evidence="2">
    <location>
        <begin position="1"/>
        <end position="20"/>
    </location>
</feature>
<feature type="region of interest" description="NMPbind" evidence="1">
    <location>
        <begin position="39"/>
        <end position="62"/>
    </location>
</feature>
<feature type="region of interest" description="LID" evidence="1">
    <location>
        <begin position="116"/>
        <end position="126"/>
    </location>
</feature>
<feature type="binding site" evidence="1">
    <location>
        <position position="19"/>
    </location>
    <ligand>
        <name>ATP</name>
        <dbReference type="ChEBI" id="CHEBI:30616"/>
    </ligand>
</feature>
<feature type="binding site" evidence="1">
    <location>
        <position position="21"/>
    </location>
    <ligand>
        <name>ATP</name>
        <dbReference type="ChEBI" id="CHEBI:30616"/>
    </ligand>
</feature>
<feature type="binding site" evidence="1">
    <location>
        <position position="22"/>
    </location>
    <ligand>
        <name>ATP</name>
        <dbReference type="ChEBI" id="CHEBI:30616"/>
    </ligand>
</feature>
<feature type="binding site" evidence="1">
    <location>
        <position position="23"/>
    </location>
    <ligand>
        <name>ATP</name>
        <dbReference type="ChEBI" id="CHEBI:30616"/>
    </ligand>
</feature>
<feature type="binding site" evidence="1">
    <location>
        <position position="24"/>
    </location>
    <ligand>
        <name>ATP</name>
        <dbReference type="ChEBI" id="CHEBI:30616"/>
    </ligand>
</feature>
<feature type="binding site" evidence="1">
    <location>
        <position position="117"/>
    </location>
    <ligand>
        <name>ATP</name>
        <dbReference type="ChEBI" id="CHEBI:30616"/>
    </ligand>
</feature>
<comment type="function">
    <text evidence="1 3">Broad-specificity nucleoside monophosphate (NMP) kinase that catalyzes the reversible transfer of the terminal phosphate group between nucleoside triphosphates and monophosphates (PubMed:16781712). Also has ATPase activity. Involved in the late cytoplasmic maturation steps of the 40S ribosomal particles, specifically 18S rRNA maturation. While NMP activity is not required for ribosome maturation, ATPase activity is. Associates transiently with small ribosomal subunit protein uS11. ATP hydrolysis breaks the interaction with uS11. May temporarily remove uS11 from the ribosome to enable a conformational change of the ribosomal RNA that is needed for the final maturation step of the small ribosomal subunit. Its NMP activity may have a role in nuclear energy homeostasis (By similarity). AMP and dAMP are the preferred substrates, but CMP and TMP are also good substrates. ATP and dATP are the best phosphate donors (PubMed:16781712).</text>
</comment>
<comment type="catalytic activity">
    <reaction evidence="1 3">
        <text>AMP + ATP = 2 ADP</text>
        <dbReference type="Rhea" id="RHEA:12973"/>
        <dbReference type="ChEBI" id="CHEBI:30616"/>
        <dbReference type="ChEBI" id="CHEBI:456215"/>
        <dbReference type="ChEBI" id="CHEBI:456216"/>
        <dbReference type="EC" id="2.7.4.3"/>
    </reaction>
</comment>
<comment type="catalytic activity">
    <reaction evidence="1">
        <text>ATP + H2O = ADP + phosphate + H(+)</text>
        <dbReference type="Rhea" id="RHEA:13065"/>
        <dbReference type="ChEBI" id="CHEBI:15377"/>
        <dbReference type="ChEBI" id="CHEBI:15378"/>
        <dbReference type="ChEBI" id="CHEBI:30616"/>
        <dbReference type="ChEBI" id="CHEBI:43474"/>
        <dbReference type="ChEBI" id="CHEBI:456216"/>
    </reaction>
</comment>
<comment type="subunit">
    <text evidence="1">Monomer and homodimer. Interacts with small ribosomal subunit protein uS11. Not a structural component of 43S pre-ribosomes, but transiently interacts with them by binding to uS11.</text>
</comment>
<comment type="subcellular location">
    <subcellularLocation>
        <location evidence="1">Cytoplasm</location>
    </subcellularLocation>
    <subcellularLocation>
        <location evidence="1 3">Nucleus</location>
    </subcellularLocation>
</comment>
<comment type="disruption phenotype">
    <text evidence="3">Suppresses worm growth.</text>
</comment>
<comment type="similarity">
    <text evidence="1">Belongs to the adenylate kinase family. AK6 subfamily.</text>
</comment>
<organism>
    <name type="scientific">Caenorhabditis elegans</name>
    <dbReference type="NCBI Taxonomy" id="6239"/>
    <lineage>
        <taxon>Eukaryota</taxon>
        <taxon>Metazoa</taxon>
        <taxon>Ecdysozoa</taxon>
        <taxon>Nematoda</taxon>
        <taxon>Chromadorea</taxon>
        <taxon>Rhabditida</taxon>
        <taxon>Rhabditina</taxon>
        <taxon>Rhabditomorpha</taxon>
        <taxon>Rhabditoidea</taxon>
        <taxon>Rhabditidae</taxon>
        <taxon>Peloderinae</taxon>
        <taxon>Caenorhabditis</taxon>
    </lineage>
</organism>